<gene>
    <name evidence="1" type="primary">adk</name>
    <name type="ordered locus">WD_0661</name>
</gene>
<organism>
    <name type="scientific">Wolbachia pipientis wMel</name>
    <dbReference type="NCBI Taxonomy" id="163164"/>
    <lineage>
        <taxon>Bacteria</taxon>
        <taxon>Pseudomonadati</taxon>
        <taxon>Pseudomonadota</taxon>
        <taxon>Alphaproteobacteria</taxon>
        <taxon>Rickettsiales</taxon>
        <taxon>Anaplasmataceae</taxon>
        <taxon>Wolbachieae</taxon>
        <taxon>Wolbachia</taxon>
    </lineage>
</organism>
<proteinExistence type="inferred from homology"/>
<dbReference type="EC" id="2.7.4.3" evidence="1"/>
<dbReference type="EMBL" id="AE017196">
    <property type="protein sequence ID" value="AAS14359.1"/>
    <property type="molecule type" value="Genomic_DNA"/>
</dbReference>
<dbReference type="RefSeq" id="WP_010962746.1">
    <property type="nucleotide sequence ID" value="NZ_OX384529.1"/>
</dbReference>
<dbReference type="SMR" id="Q73HA6"/>
<dbReference type="EnsemblBacteria" id="AAS14359">
    <property type="protein sequence ID" value="AAS14359"/>
    <property type="gene ID" value="WD_0661"/>
</dbReference>
<dbReference type="KEGG" id="wol:WD_0661"/>
<dbReference type="eggNOG" id="COG0563">
    <property type="taxonomic scope" value="Bacteria"/>
</dbReference>
<dbReference type="UniPathway" id="UPA00588">
    <property type="reaction ID" value="UER00649"/>
</dbReference>
<dbReference type="Proteomes" id="UP000008215">
    <property type="component" value="Chromosome"/>
</dbReference>
<dbReference type="GO" id="GO:0005737">
    <property type="term" value="C:cytoplasm"/>
    <property type="evidence" value="ECO:0007669"/>
    <property type="project" value="UniProtKB-SubCell"/>
</dbReference>
<dbReference type="GO" id="GO:0004017">
    <property type="term" value="F:adenylate kinase activity"/>
    <property type="evidence" value="ECO:0007669"/>
    <property type="project" value="UniProtKB-UniRule"/>
</dbReference>
<dbReference type="GO" id="GO:0005524">
    <property type="term" value="F:ATP binding"/>
    <property type="evidence" value="ECO:0007669"/>
    <property type="project" value="UniProtKB-UniRule"/>
</dbReference>
<dbReference type="GO" id="GO:0008270">
    <property type="term" value="F:zinc ion binding"/>
    <property type="evidence" value="ECO:0007669"/>
    <property type="project" value="UniProtKB-UniRule"/>
</dbReference>
<dbReference type="GO" id="GO:0044209">
    <property type="term" value="P:AMP salvage"/>
    <property type="evidence" value="ECO:0007669"/>
    <property type="project" value="UniProtKB-UniRule"/>
</dbReference>
<dbReference type="CDD" id="cd01428">
    <property type="entry name" value="ADK"/>
    <property type="match status" value="1"/>
</dbReference>
<dbReference type="Gene3D" id="3.40.50.300">
    <property type="entry name" value="P-loop containing nucleotide triphosphate hydrolases"/>
    <property type="match status" value="1"/>
</dbReference>
<dbReference type="HAMAP" id="MF_00235">
    <property type="entry name" value="Adenylate_kinase_Adk"/>
    <property type="match status" value="1"/>
</dbReference>
<dbReference type="InterPro" id="IPR006259">
    <property type="entry name" value="Adenyl_kin_sub"/>
</dbReference>
<dbReference type="InterPro" id="IPR000850">
    <property type="entry name" value="Adenylat/UMP-CMP_kin"/>
</dbReference>
<dbReference type="InterPro" id="IPR033690">
    <property type="entry name" value="Adenylat_kinase_CS"/>
</dbReference>
<dbReference type="InterPro" id="IPR027417">
    <property type="entry name" value="P-loop_NTPase"/>
</dbReference>
<dbReference type="NCBIfam" id="TIGR01351">
    <property type="entry name" value="adk"/>
    <property type="match status" value="1"/>
</dbReference>
<dbReference type="PANTHER" id="PTHR23359">
    <property type="entry name" value="NUCLEOTIDE KINASE"/>
    <property type="match status" value="1"/>
</dbReference>
<dbReference type="Pfam" id="PF00406">
    <property type="entry name" value="ADK"/>
    <property type="match status" value="1"/>
</dbReference>
<dbReference type="PRINTS" id="PR00094">
    <property type="entry name" value="ADENYLTKNASE"/>
</dbReference>
<dbReference type="SUPFAM" id="SSF52540">
    <property type="entry name" value="P-loop containing nucleoside triphosphate hydrolases"/>
    <property type="match status" value="1"/>
</dbReference>
<dbReference type="PROSITE" id="PS00113">
    <property type="entry name" value="ADENYLATE_KINASE"/>
    <property type="match status" value="1"/>
</dbReference>
<name>KAD_WOLPM</name>
<protein>
    <recommendedName>
        <fullName evidence="1">Adenylate kinase</fullName>
        <shortName evidence="1">AK</shortName>
        <ecNumber evidence="1">2.7.4.3</ecNumber>
    </recommendedName>
    <alternativeName>
        <fullName evidence="1">ATP-AMP transphosphorylase</fullName>
    </alternativeName>
    <alternativeName>
        <fullName evidence="1">ATP:AMP phosphotransferase</fullName>
    </alternativeName>
    <alternativeName>
        <fullName evidence="1">Adenylate monophosphate kinase</fullName>
    </alternativeName>
</protein>
<evidence type="ECO:0000255" key="1">
    <source>
        <dbReference type="HAMAP-Rule" id="MF_00235"/>
    </source>
</evidence>
<comment type="function">
    <text evidence="1">Catalyzes the reversible transfer of the terminal phosphate group between ATP and AMP. Plays an important role in cellular energy homeostasis and in adenine nucleotide metabolism.</text>
</comment>
<comment type="catalytic activity">
    <reaction evidence="1">
        <text>AMP + ATP = 2 ADP</text>
        <dbReference type="Rhea" id="RHEA:12973"/>
        <dbReference type="ChEBI" id="CHEBI:30616"/>
        <dbReference type="ChEBI" id="CHEBI:456215"/>
        <dbReference type="ChEBI" id="CHEBI:456216"/>
        <dbReference type="EC" id="2.7.4.3"/>
    </reaction>
</comment>
<comment type="pathway">
    <text evidence="1">Purine metabolism; AMP biosynthesis via salvage pathway; AMP from ADP: step 1/1.</text>
</comment>
<comment type="subunit">
    <text evidence="1">Monomer.</text>
</comment>
<comment type="subcellular location">
    <subcellularLocation>
        <location evidence="1">Cytoplasm</location>
    </subcellularLocation>
</comment>
<comment type="domain">
    <text evidence="1">Consists of three domains, a large central CORE domain and two small peripheral domains, NMPbind and LID, which undergo movements during catalysis. The LID domain closes over the site of phosphoryl transfer upon ATP binding. Assembling and dissambling the active center during each catalytic cycle provides an effective means to prevent ATP hydrolysis. Some bacteria have evolved a zinc-coordinating structure that stabilizes the LID domain.</text>
</comment>
<comment type="similarity">
    <text evidence="1">Belongs to the adenylate kinase family.</text>
</comment>
<sequence>MIITIFGPPGSGKGTQSSLLIAKYNLKLISVGDLLRNIISSSSELGKKIKGTVESGNLIQDEIICGLLRDQLALVDDNCLLDGFPRNLNQAHFLTQVLQEKYNRDVDIVVELQLDDNIAIDRLKNRLACLDCKNIYSVSSFKSTTCAKCKSTRLEKRIDDADMSAINKRISEYHLQMKGLREYYKGKLLTIDANLSVDEVTQEIESKISCNLV</sequence>
<feature type="chain" id="PRO_0000158887" description="Adenylate kinase">
    <location>
        <begin position="1"/>
        <end position="213"/>
    </location>
</feature>
<feature type="region of interest" description="NMP" evidence="1">
    <location>
        <begin position="30"/>
        <end position="59"/>
    </location>
</feature>
<feature type="region of interest" description="LID" evidence="1">
    <location>
        <begin position="125"/>
        <end position="160"/>
    </location>
</feature>
<feature type="binding site" evidence="1">
    <location>
        <begin position="10"/>
        <end position="15"/>
    </location>
    <ligand>
        <name>ATP</name>
        <dbReference type="ChEBI" id="CHEBI:30616"/>
    </ligand>
</feature>
<feature type="binding site" evidence="1">
    <location>
        <position position="36"/>
    </location>
    <ligand>
        <name>AMP</name>
        <dbReference type="ChEBI" id="CHEBI:456215"/>
    </ligand>
</feature>
<feature type="binding site" evidence="1">
    <location>
        <begin position="57"/>
        <end position="59"/>
    </location>
    <ligand>
        <name>AMP</name>
        <dbReference type="ChEBI" id="CHEBI:456215"/>
    </ligand>
</feature>
<feature type="binding site" evidence="1">
    <location>
        <begin position="83"/>
        <end position="86"/>
    </location>
    <ligand>
        <name>AMP</name>
        <dbReference type="ChEBI" id="CHEBI:456215"/>
    </ligand>
</feature>
<feature type="binding site" evidence="1">
    <location>
        <position position="90"/>
    </location>
    <ligand>
        <name>AMP</name>
        <dbReference type="ChEBI" id="CHEBI:456215"/>
    </ligand>
</feature>
<feature type="binding site" evidence="1">
    <location>
        <position position="126"/>
    </location>
    <ligand>
        <name>ATP</name>
        <dbReference type="ChEBI" id="CHEBI:30616"/>
    </ligand>
</feature>
<feature type="binding site" evidence="1">
    <location>
        <position position="129"/>
    </location>
    <ligand>
        <name>Zn(2+)</name>
        <dbReference type="ChEBI" id="CHEBI:29105"/>
        <note>structural</note>
    </ligand>
</feature>
<feature type="binding site" evidence="1">
    <location>
        <position position="132"/>
    </location>
    <ligand>
        <name>Zn(2+)</name>
        <dbReference type="ChEBI" id="CHEBI:29105"/>
        <note>structural</note>
    </ligand>
</feature>
<feature type="binding site" evidence="1">
    <location>
        <begin position="135"/>
        <end position="136"/>
    </location>
    <ligand>
        <name>ATP</name>
        <dbReference type="ChEBI" id="CHEBI:30616"/>
    </ligand>
</feature>
<feature type="binding site" evidence="1">
    <location>
        <position position="146"/>
    </location>
    <ligand>
        <name>Zn(2+)</name>
        <dbReference type="ChEBI" id="CHEBI:29105"/>
        <note>structural</note>
    </ligand>
</feature>
<feature type="binding site" evidence="1">
    <location>
        <position position="149"/>
    </location>
    <ligand>
        <name>Zn(2+)</name>
        <dbReference type="ChEBI" id="CHEBI:29105"/>
        <note>structural</note>
    </ligand>
</feature>
<feature type="binding site" evidence="1">
    <location>
        <position position="157"/>
    </location>
    <ligand>
        <name>AMP</name>
        <dbReference type="ChEBI" id="CHEBI:456215"/>
    </ligand>
</feature>
<feature type="binding site" evidence="1">
    <location>
        <position position="169"/>
    </location>
    <ligand>
        <name>AMP</name>
        <dbReference type="ChEBI" id="CHEBI:456215"/>
    </ligand>
</feature>
<feature type="binding site" evidence="1">
    <location>
        <position position="195"/>
    </location>
    <ligand>
        <name>ATP</name>
        <dbReference type="ChEBI" id="CHEBI:30616"/>
    </ligand>
</feature>
<reference key="1">
    <citation type="journal article" date="2004" name="PLoS Biol.">
        <title>Phylogenomics of the reproductive parasite Wolbachia pipientis wMel: a streamlined genome overrun by mobile genetic elements.</title>
        <authorList>
            <person name="Wu M."/>
            <person name="Sun L.V."/>
            <person name="Vamathevan J.J."/>
            <person name="Riegler M."/>
            <person name="DeBoy R.T."/>
            <person name="Brownlie J.C."/>
            <person name="McGraw E.A."/>
            <person name="Martin W."/>
            <person name="Esser C."/>
            <person name="Ahmadinejad N."/>
            <person name="Wiegand C."/>
            <person name="Madupu R."/>
            <person name="Beanan M.J."/>
            <person name="Brinkac L.M."/>
            <person name="Daugherty S.C."/>
            <person name="Durkin A.S."/>
            <person name="Kolonay J.F."/>
            <person name="Nelson W.C."/>
            <person name="Mohamoud Y."/>
            <person name="Lee P."/>
            <person name="Berry K.J."/>
            <person name="Young M.B."/>
            <person name="Utterback T.R."/>
            <person name="Weidman J.F."/>
            <person name="Nierman W.C."/>
            <person name="Paulsen I.T."/>
            <person name="Nelson K.E."/>
            <person name="Tettelin H."/>
            <person name="O'Neill S.L."/>
            <person name="Eisen J.A."/>
        </authorList>
    </citation>
    <scope>NUCLEOTIDE SEQUENCE [LARGE SCALE GENOMIC DNA]</scope>
</reference>
<keyword id="KW-0067">ATP-binding</keyword>
<keyword id="KW-0963">Cytoplasm</keyword>
<keyword id="KW-0418">Kinase</keyword>
<keyword id="KW-0479">Metal-binding</keyword>
<keyword id="KW-0545">Nucleotide biosynthesis</keyword>
<keyword id="KW-0547">Nucleotide-binding</keyword>
<keyword id="KW-0808">Transferase</keyword>
<keyword id="KW-0862">Zinc</keyword>
<accession>Q73HA6</accession>